<comment type="function">
    <text evidence="1">Binds to sigma F and blocks its ability to form an RNA polymerase holoenzyme (E-sigma F). Phosphorylates SpoIIAA on a serine residue. This phosphorylation may enable SpoIIAA to act as an anti-anti-sigma factor that counteracts SpoIIAB and thus releases sigma F from inhibition.</text>
</comment>
<comment type="catalytic activity">
    <reaction evidence="1">
        <text>L-seryl-[protein] + ATP = O-phospho-L-seryl-[protein] + ADP + H(+)</text>
        <dbReference type="Rhea" id="RHEA:17989"/>
        <dbReference type="Rhea" id="RHEA-COMP:9863"/>
        <dbReference type="Rhea" id="RHEA-COMP:11604"/>
        <dbReference type="ChEBI" id="CHEBI:15378"/>
        <dbReference type="ChEBI" id="CHEBI:29999"/>
        <dbReference type="ChEBI" id="CHEBI:30616"/>
        <dbReference type="ChEBI" id="CHEBI:83421"/>
        <dbReference type="ChEBI" id="CHEBI:456216"/>
        <dbReference type="EC" id="2.7.11.1"/>
    </reaction>
</comment>
<comment type="catalytic activity">
    <reaction evidence="1">
        <text>L-threonyl-[protein] + ATP = O-phospho-L-threonyl-[protein] + ADP + H(+)</text>
        <dbReference type="Rhea" id="RHEA:46608"/>
        <dbReference type="Rhea" id="RHEA-COMP:11060"/>
        <dbReference type="Rhea" id="RHEA-COMP:11605"/>
        <dbReference type="ChEBI" id="CHEBI:15378"/>
        <dbReference type="ChEBI" id="CHEBI:30013"/>
        <dbReference type="ChEBI" id="CHEBI:30616"/>
        <dbReference type="ChEBI" id="CHEBI:61977"/>
        <dbReference type="ChEBI" id="CHEBI:456216"/>
        <dbReference type="EC" id="2.7.11.1"/>
    </reaction>
</comment>
<comment type="similarity">
    <text evidence="1">Belongs to the anti-sigma-factor family.</text>
</comment>
<keyword id="KW-0067">ATP-binding</keyword>
<keyword id="KW-0418">Kinase</keyword>
<keyword id="KW-0547">Nucleotide-binding</keyword>
<keyword id="KW-0723">Serine/threonine-protein kinase</keyword>
<keyword id="KW-0749">Sporulation</keyword>
<keyword id="KW-0808">Transferase</keyword>
<accession>B7JLS6</accession>
<name>SP2AB_BACC0</name>
<proteinExistence type="inferred from homology"/>
<protein>
    <recommendedName>
        <fullName evidence="1">Anti-sigma F factor</fullName>
        <ecNumber evidence="1">2.7.11.1</ecNumber>
    </recommendedName>
    <alternativeName>
        <fullName evidence="1">Stage II sporulation protein AB</fullName>
    </alternativeName>
</protein>
<dbReference type="EC" id="2.7.11.1" evidence="1"/>
<dbReference type="EMBL" id="CP001283">
    <property type="protein sequence ID" value="ACK88818.1"/>
    <property type="molecule type" value="Genomic_DNA"/>
</dbReference>
<dbReference type="RefSeq" id="WP_001243400.1">
    <property type="nucleotide sequence ID" value="NC_011773.1"/>
</dbReference>
<dbReference type="SMR" id="B7JLS6"/>
<dbReference type="GeneID" id="92883500"/>
<dbReference type="KEGG" id="bcu:BCAH820_4095"/>
<dbReference type="HOGENOM" id="CLU_090336_11_0_9"/>
<dbReference type="Proteomes" id="UP000001363">
    <property type="component" value="Chromosome"/>
</dbReference>
<dbReference type="GO" id="GO:0005524">
    <property type="term" value="F:ATP binding"/>
    <property type="evidence" value="ECO:0007669"/>
    <property type="project" value="UniProtKB-KW"/>
</dbReference>
<dbReference type="GO" id="GO:0106310">
    <property type="term" value="F:protein serine kinase activity"/>
    <property type="evidence" value="ECO:0007669"/>
    <property type="project" value="RHEA"/>
</dbReference>
<dbReference type="GO" id="GO:0004674">
    <property type="term" value="F:protein serine/threonine kinase activity"/>
    <property type="evidence" value="ECO:0007669"/>
    <property type="project" value="UniProtKB-KW"/>
</dbReference>
<dbReference type="GO" id="GO:0016989">
    <property type="term" value="F:sigma factor antagonist activity"/>
    <property type="evidence" value="ECO:0007669"/>
    <property type="project" value="InterPro"/>
</dbReference>
<dbReference type="GO" id="GO:0030436">
    <property type="term" value="P:asexual sporulation"/>
    <property type="evidence" value="ECO:0007669"/>
    <property type="project" value="UniProtKB-UniRule"/>
</dbReference>
<dbReference type="GO" id="GO:0042174">
    <property type="term" value="P:negative regulation of sporulation resulting in formation of a cellular spore"/>
    <property type="evidence" value="ECO:0007669"/>
    <property type="project" value="InterPro"/>
</dbReference>
<dbReference type="GO" id="GO:0030435">
    <property type="term" value="P:sporulation resulting in formation of a cellular spore"/>
    <property type="evidence" value="ECO:0007669"/>
    <property type="project" value="UniProtKB-KW"/>
</dbReference>
<dbReference type="FunFam" id="3.30.565.10:FF:000022">
    <property type="entry name" value="Anti-sigma F factor"/>
    <property type="match status" value="1"/>
</dbReference>
<dbReference type="Gene3D" id="3.30.565.10">
    <property type="entry name" value="Histidine kinase-like ATPase, C-terminal domain"/>
    <property type="match status" value="1"/>
</dbReference>
<dbReference type="HAMAP" id="MF_00637">
    <property type="entry name" value="Anti_sigma_F"/>
    <property type="match status" value="1"/>
</dbReference>
<dbReference type="InterPro" id="IPR050267">
    <property type="entry name" value="Anti-sigma-factor_SerPK"/>
</dbReference>
<dbReference type="InterPro" id="IPR010194">
    <property type="entry name" value="Anti-sigma_F"/>
</dbReference>
<dbReference type="InterPro" id="IPR036890">
    <property type="entry name" value="HATPase_C_sf"/>
</dbReference>
<dbReference type="NCBIfam" id="TIGR01925">
    <property type="entry name" value="spIIAB"/>
    <property type="match status" value="1"/>
</dbReference>
<dbReference type="PANTHER" id="PTHR35526:SF3">
    <property type="entry name" value="ANTI-SIGMA-F FACTOR RSBW"/>
    <property type="match status" value="1"/>
</dbReference>
<dbReference type="PANTHER" id="PTHR35526">
    <property type="entry name" value="ANTI-SIGMA-F FACTOR RSBW-RELATED"/>
    <property type="match status" value="1"/>
</dbReference>
<dbReference type="Pfam" id="PF13581">
    <property type="entry name" value="HATPase_c_2"/>
    <property type="match status" value="1"/>
</dbReference>
<dbReference type="SMART" id="SM00387">
    <property type="entry name" value="HATPase_c"/>
    <property type="match status" value="1"/>
</dbReference>
<dbReference type="SUPFAM" id="SSF55874">
    <property type="entry name" value="ATPase domain of HSP90 chaperone/DNA topoisomerase II/histidine kinase"/>
    <property type="match status" value="1"/>
</dbReference>
<feature type="chain" id="PRO_1000130802" description="Anti-sigma F factor">
    <location>
        <begin position="1"/>
        <end position="146"/>
    </location>
</feature>
<reference key="1">
    <citation type="submission" date="2008-10" db="EMBL/GenBank/DDBJ databases">
        <title>Genome sequence of Bacillus cereus AH820.</title>
        <authorList>
            <person name="Dodson R.J."/>
            <person name="Durkin A.S."/>
            <person name="Rosovitz M.J."/>
            <person name="Rasko D.A."/>
            <person name="Hoffmaster A."/>
            <person name="Ravel J."/>
            <person name="Sutton G."/>
        </authorList>
    </citation>
    <scope>NUCLEOTIDE SEQUENCE [LARGE SCALE GENOMIC DNA]</scope>
    <source>
        <strain>AH820</strain>
    </source>
</reference>
<sequence length="146" mass="16246">MRNEMNLQFSALSQNESFARVTVAAFIAQLDPTMEELTEIKTVVSEAVTNAIIHGYEGNAEGVVYISVILEEAMVKLTIRDEGIGIFNLDEARQPLFTTKPELERSGMGFTIMENFMDEVEVISNESFGTTIHLTKYLSNSNALCN</sequence>
<gene>
    <name evidence="1" type="primary">spoIIAB</name>
    <name type="ordered locus">BCAH820_4095</name>
</gene>
<organism>
    <name type="scientific">Bacillus cereus (strain AH820)</name>
    <dbReference type="NCBI Taxonomy" id="405535"/>
    <lineage>
        <taxon>Bacteria</taxon>
        <taxon>Bacillati</taxon>
        <taxon>Bacillota</taxon>
        <taxon>Bacilli</taxon>
        <taxon>Bacillales</taxon>
        <taxon>Bacillaceae</taxon>
        <taxon>Bacillus</taxon>
        <taxon>Bacillus cereus group</taxon>
    </lineage>
</organism>
<evidence type="ECO:0000255" key="1">
    <source>
        <dbReference type="HAMAP-Rule" id="MF_00637"/>
    </source>
</evidence>